<name>PRIO_GORGO</name>
<feature type="signal peptide" evidence="1">
    <location>
        <begin position="1"/>
        <end position="22"/>
    </location>
</feature>
<feature type="chain" id="PRO_0000025673" description="Major prion protein">
    <location>
        <begin position="23"/>
        <end position="230"/>
    </location>
</feature>
<feature type="propeptide" id="PRO_0000025674" description="Removed in mature form" evidence="1">
    <location>
        <begin position="231"/>
        <end position="253"/>
    </location>
</feature>
<feature type="repeat" description="1">
    <location>
        <begin position="51"/>
        <end position="59"/>
    </location>
</feature>
<feature type="repeat" description="2">
    <location>
        <begin position="60"/>
        <end position="67"/>
    </location>
</feature>
<feature type="repeat" description="3">
    <location>
        <begin position="68"/>
        <end position="75"/>
    </location>
</feature>
<feature type="repeat" description="4">
    <location>
        <begin position="76"/>
        <end position="83"/>
    </location>
</feature>
<feature type="repeat" description="5">
    <location>
        <begin position="84"/>
        <end position="91"/>
    </location>
</feature>
<feature type="region of interest" description="Interaction with GRB2, ERI3 and SYN1" evidence="4">
    <location>
        <begin position="23"/>
        <end position="230"/>
    </location>
</feature>
<feature type="region of interest" description="Interaction with ADGRG6" evidence="4">
    <location>
        <begin position="23"/>
        <end position="38"/>
    </location>
</feature>
<feature type="region of interest" description="Disordered" evidence="6">
    <location>
        <begin position="26"/>
        <end position="108"/>
    </location>
</feature>
<feature type="region of interest" description="5 X 8 AA tandem repeats of P-H-G-G-G-W-G-Q">
    <location>
        <begin position="51"/>
        <end position="91"/>
    </location>
</feature>
<feature type="compositionally biased region" description="Gly residues" evidence="6">
    <location>
        <begin position="52"/>
        <end position="95"/>
    </location>
</feature>
<feature type="binding site" evidence="2">
    <location>
        <position position="61"/>
    </location>
    <ligand>
        <name>Cu(2+)</name>
        <dbReference type="ChEBI" id="CHEBI:29036"/>
        <label>1</label>
    </ligand>
</feature>
<feature type="binding site" evidence="2">
    <location>
        <position position="62"/>
    </location>
    <ligand>
        <name>Cu(2+)</name>
        <dbReference type="ChEBI" id="CHEBI:29036"/>
        <label>1</label>
    </ligand>
</feature>
<feature type="binding site" evidence="2">
    <location>
        <position position="63"/>
    </location>
    <ligand>
        <name>Cu(2+)</name>
        <dbReference type="ChEBI" id="CHEBI:29036"/>
        <label>1</label>
    </ligand>
</feature>
<feature type="binding site" evidence="2">
    <location>
        <position position="69"/>
    </location>
    <ligand>
        <name>Cu(2+)</name>
        <dbReference type="ChEBI" id="CHEBI:29036"/>
        <label>2</label>
    </ligand>
</feature>
<feature type="binding site" evidence="2">
    <location>
        <position position="70"/>
    </location>
    <ligand>
        <name>Cu(2+)</name>
        <dbReference type="ChEBI" id="CHEBI:29036"/>
        <label>2</label>
    </ligand>
</feature>
<feature type="binding site" evidence="2">
    <location>
        <position position="71"/>
    </location>
    <ligand>
        <name>Cu(2+)</name>
        <dbReference type="ChEBI" id="CHEBI:29036"/>
        <label>2</label>
    </ligand>
</feature>
<feature type="binding site" evidence="2">
    <location>
        <position position="77"/>
    </location>
    <ligand>
        <name>Cu(2+)</name>
        <dbReference type="ChEBI" id="CHEBI:29036"/>
        <label>3</label>
    </ligand>
</feature>
<feature type="binding site" evidence="2">
    <location>
        <position position="78"/>
    </location>
    <ligand>
        <name>Cu(2+)</name>
        <dbReference type="ChEBI" id="CHEBI:29036"/>
        <label>3</label>
    </ligand>
</feature>
<feature type="binding site" evidence="2">
    <location>
        <position position="79"/>
    </location>
    <ligand>
        <name>Cu(2+)</name>
        <dbReference type="ChEBI" id="CHEBI:29036"/>
        <label>3</label>
    </ligand>
</feature>
<feature type="binding site" evidence="2">
    <location>
        <position position="85"/>
    </location>
    <ligand>
        <name>Cu(2+)</name>
        <dbReference type="ChEBI" id="CHEBI:29036"/>
        <label>4</label>
    </ligand>
</feature>
<feature type="binding site" evidence="2">
    <location>
        <position position="86"/>
    </location>
    <ligand>
        <name>Cu(2+)</name>
        <dbReference type="ChEBI" id="CHEBI:29036"/>
        <label>4</label>
    </ligand>
</feature>
<feature type="binding site" evidence="2">
    <location>
        <position position="87"/>
    </location>
    <ligand>
        <name>Cu(2+)</name>
        <dbReference type="ChEBI" id="CHEBI:29036"/>
        <label>4</label>
    </ligand>
</feature>
<feature type="lipid moiety-binding region" description="GPI-anchor amidated serine" evidence="3">
    <location>
        <position position="230"/>
    </location>
</feature>
<feature type="glycosylation site" description="N-linked (GlcNAc...) asparagine" evidence="5">
    <location>
        <position position="181"/>
    </location>
</feature>
<feature type="glycosylation site" description="N-linked (GlcNAc...) asparagine" evidence="5">
    <location>
        <position position="197"/>
    </location>
</feature>
<feature type="disulfide bond" evidence="3">
    <location>
        <begin position="179"/>
        <end position="214"/>
    </location>
</feature>
<feature type="sequence conflict" description="In Ref. 2; AAA68633." evidence="7" ref="2">
    <original>C</original>
    <variation>Y</variation>
    <location>
        <position position="6"/>
    </location>
</feature>
<keyword id="KW-0034">Amyloid</keyword>
<keyword id="KW-1003">Cell membrane</keyword>
<keyword id="KW-0186">Copper</keyword>
<keyword id="KW-1015">Disulfide bond</keyword>
<keyword id="KW-0325">Glycoprotein</keyword>
<keyword id="KW-0333">Golgi apparatus</keyword>
<keyword id="KW-0336">GPI-anchor</keyword>
<keyword id="KW-0449">Lipoprotein</keyword>
<keyword id="KW-0472">Membrane</keyword>
<keyword id="KW-0479">Metal-binding</keyword>
<keyword id="KW-0640">Prion</keyword>
<keyword id="KW-1185">Reference proteome</keyword>
<keyword id="KW-0677">Repeat</keyword>
<keyword id="KW-0732">Signal</keyword>
<keyword id="KW-0862">Zinc</keyword>
<reference key="1">
    <citation type="journal article" date="1995" name="J. Mol. Biol.">
        <title>Prion protein gene variation among primates.</title>
        <authorList>
            <person name="Schaetzl H.M."/>
            <person name="Da Costa M."/>
            <person name="Taylor L."/>
            <person name="Cohen F.E."/>
            <person name="Prusiner S.B."/>
        </authorList>
    </citation>
    <scope>NUCLEOTIDE SEQUENCE [GENOMIC DNA]</scope>
</reference>
<reference key="2">
    <citation type="journal article" date="1994" name="Proc. Natl. Acad. Sci. U.S.A.">
        <title>Infectious amyloid precursor gene sequences in primates used for experimental transmission of human spongiform encephalopathy.</title>
        <authorList>
            <person name="Cervenakova L."/>
            <person name="Brown P."/>
            <person name="Goldfarb L.G."/>
            <person name="Nagle J."/>
            <person name="Pettrone K."/>
            <person name="Rubenstein R."/>
            <person name="Dubnick M."/>
            <person name="Gibbs C.J."/>
            <person name="Gajdusek D.C."/>
        </authorList>
    </citation>
    <scope>NUCLEOTIDE SEQUENCE [GENOMIC DNA]</scope>
    <source>
        <tissue>Blood</tissue>
    </source>
</reference>
<protein>
    <recommendedName>
        <fullName>Major prion protein</fullName>
        <shortName>PrP</shortName>
    </recommendedName>
    <alternativeName>
        <fullName>PrP27-30</fullName>
    </alternativeName>
    <alternativeName>
        <fullName>PrP33-35C</fullName>
    </alternativeName>
    <cdAntigenName>CD230</cdAntigenName>
</protein>
<evidence type="ECO:0000250" key="1"/>
<evidence type="ECO:0000250" key="2">
    <source>
        <dbReference type="UniProtKB" id="P04156"/>
    </source>
</evidence>
<evidence type="ECO:0000250" key="3">
    <source>
        <dbReference type="UniProtKB" id="P04273"/>
    </source>
</evidence>
<evidence type="ECO:0000250" key="4">
    <source>
        <dbReference type="UniProtKB" id="P04925"/>
    </source>
</evidence>
<evidence type="ECO:0000255" key="5"/>
<evidence type="ECO:0000256" key="6">
    <source>
        <dbReference type="SAM" id="MobiDB-lite"/>
    </source>
</evidence>
<evidence type="ECO:0000305" key="7"/>
<proteinExistence type="inferred from homology"/>
<organism>
    <name type="scientific">Gorilla gorilla gorilla</name>
    <name type="common">Western lowland gorilla</name>
    <dbReference type="NCBI Taxonomy" id="9595"/>
    <lineage>
        <taxon>Eukaryota</taxon>
        <taxon>Metazoa</taxon>
        <taxon>Chordata</taxon>
        <taxon>Craniata</taxon>
        <taxon>Vertebrata</taxon>
        <taxon>Euteleostomi</taxon>
        <taxon>Mammalia</taxon>
        <taxon>Eutheria</taxon>
        <taxon>Euarchontoglires</taxon>
        <taxon>Primates</taxon>
        <taxon>Haplorrhini</taxon>
        <taxon>Catarrhini</taxon>
        <taxon>Hominidae</taxon>
        <taxon>Gorilla</taxon>
    </lineage>
</organism>
<dbReference type="EMBL" id="U08300">
    <property type="protein sequence ID" value="AAC50089.1"/>
    <property type="molecule type" value="Genomic_DNA"/>
</dbReference>
<dbReference type="EMBL" id="U15166">
    <property type="protein sequence ID" value="AAA68633.1"/>
    <property type="molecule type" value="Genomic_DNA"/>
</dbReference>
<dbReference type="PIR" id="I37032">
    <property type="entry name" value="I37032"/>
</dbReference>
<dbReference type="PIR" id="S53614">
    <property type="entry name" value="S53614"/>
</dbReference>
<dbReference type="RefSeq" id="XP_004061812.1">
    <property type="nucleotide sequence ID" value="XM_004061764.2"/>
</dbReference>
<dbReference type="RefSeq" id="XP_018872663.1">
    <property type="nucleotide sequence ID" value="XM_019017118.4"/>
</dbReference>
<dbReference type="RefSeq" id="XP_018872664.1">
    <property type="nucleotide sequence ID" value="XM_019017119.4"/>
</dbReference>
<dbReference type="RefSeq" id="XP_055228486.1">
    <property type="nucleotide sequence ID" value="XM_055372511.2"/>
</dbReference>
<dbReference type="BMRB" id="P40252"/>
<dbReference type="SMR" id="P40252"/>
<dbReference type="FunCoup" id="P40252">
    <property type="interactions" value="495"/>
</dbReference>
<dbReference type="STRING" id="9593.ENSGGOP00000034151"/>
<dbReference type="GlyCosmos" id="P40252">
    <property type="glycosylation" value="2 sites, No reported glycans"/>
</dbReference>
<dbReference type="Ensembl" id="ENSGGOT00000044450.1">
    <property type="protein sequence ID" value="ENSGGOP00000034151.1"/>
    <property type="gene ID" value="ENSGGOG00000036480.1"/>
</dbReference>
<dbReference type="GeneID" id="101135304"/>
<dbReference type="KEGG" id="ggo:101135304"/>
<dbReference type="CTD" id="5621"/>
<dbReference type="eggNOG" id="ENOG502S2A8">
    <property type="taxonomic scope" value="Eukaryota"/>
</dbReference>
<dbReference type="GeneTree" id="ENSGT00510000049083"/>
<dbReference type="HOGENOM" id="CLU_094631_0_0_1"/>
<dbReference type="InParanoid" id="P40252"/>
<dbReference type="OMA" id="QMCTTQY"/>
<dbReference type="OrthoDB" id="16850at9604"/>
<dbReference type="Proteomes" id="UP000001519">
    <property type="component" value="Chromosome 20"/>
</dbReference>
<dbReference type="Bgee" id="ENSGGOG00000036480">
    <property type="expression patterns" value="Expressed in prefrontal cortex and 5 other cell types or tissues"/>
</dbReference>
<dbReference type="GO" id="GO:0009986">
    <property type="term" value="C:cell surface"/>
    <property type="evidence" value="ECO:0007669"/>
    <property type="project" value="Ensembl"/>
</dbReference>
<dbReference type="GO" id="GO:0005829">
    <property type="term" value="C:cytosol"/>
    <property type="evidence" value="ECO:0007669"/>
    <property type="project" value="Ensembl"/>
</dbReference>
<dbReference type="GO" id="GO:0030425">
    <property type="term" value="C:dendrite"/>
    <property type="evidence" value="ECO:0007669"/>
    <property type="project" value="Ensembl"/>
</dbReference>
<dbReference type="GO" id="GO:0005783">
    <property type="term" value="C:endoplasmic reticulum"/>
    <property type="evidence" value="ECO:0007669"/>
    <property type="project" value="Ensembl"/>
</dbReference>
<dbReference type="GO" id="GO:0005794">
    <property type="term" value="C:Golgi apparatus"/>
    <property type="evidence" value="ECO:0007669"/>
    <property type="project" value="UniProtKB-SubCell"/>
</dbReference>
<dbReference type="GO" id="GO:0016234">
    <property type="term" value="C:inclusion body"/>
    <property type="evidence" value="ECO:0007669"/>
    <property type="project" value="Ensembl"/>
</dbReference>
<dbReference type="GO" id="GO:0045121">
    <property type="term" value="C:membrane raft"/>
    <property type="evidence" value="ECO:0007669"/>
    <property type="project" value="Ensembl"/>
</dbReference>
<dbReference type="GO" id="GO:0031965">
    <property type="term" value="C:nuclear membrane"/>
    <property type="evidence" value="ECO:0007669"/>
    <property type="project" value="Ensembl"/>
</dbReference>
<dbReference type="GO" id="GO:0005886">
    <property type="term" value="C:plasma membrane"/>
    <property type="evidence" value="ECO:0007669"/>
    <property type="project" value="UniProtKB-SubCell"/>
</dbReference>
<dbReference type="GO" id="GO:0098552">
    <property type="term" value="C:side of membrane"/>
    <property type="evidence" value="ECO:0007669"/>
    <property type="project" value="UniProtKB-KW"/>
</dbReference>
<dbReference type="GO" id="GO:0043195">
    <property type="term" value="C:terminal bouton"/>
    <property type="evidence" value="ECO:0007669"/>
    <property type="project" value="Ensembl"/>
</dbReference>
<dbReference type="GO" id="GO:0001540">
    <property type="term" value="F:amyloid-beta binding"/>
    <property type="evidence" value="ECO:0007669"/>
    <property type="project" value="Ensembl"/>
</dbReference>
<dbReference type="GO" id="GO:0019828">
    <property type="term" value="F:aspartic-type endopeptidase inhibitor activity"/>
    <property type="evidence" value="ECO:0007669"/>
    <property type="project" value="Ensembl"/>
</dbReference>
<dbReference type="GO" id="GO:0005507">
    <property type="term" value="F:copper ion binding"/>
    <property type="evidence" value="ECO:0000250"/>
    <property type="project" value="UniProtKB"/>
</dbReference>
<dbReference type="GO" id="GO:1903135">
    <property type="term" value="F:cupric ion binding"/>
    <property type="evidence" value="ECO:0007669"/>
    <property type="project" value="Ensembl"/>
</dbReference>
<dbReference type="GO" id="GO:1903136">
    <property type="term" value="F:cuprous ion binding"/>
    <property type="evidence" value="ECO:0007669"/>
    <property type="project" value="Ensembl"/>
</dbReference>
<dbReference type="GO" id="GO:0005539">
    <property type="term" value="F:glycosaminoglycan binding"/>
    <property type="evidence" value="ECO:0007669"/>
    <property type="project" value="Ensembl"/>
</dbReference>
<dbReference type="GO" id="GO:0042802">
    <property type="term" value="F:identical protein binding"/>
    <property type="evidence" value="ECO:0007669"/>
    <property type="project" value="Ensembl"/>
</dbReference>
<dbReference type="GO" id="GO:0008017">
    <property type="term" value="F:microtubule binding"/>
    <property type="evidence" value="ECO:0007669"/>
    <property type="project" value="Ensembl"/>
</dbReference>
<dbReference type="GO" id="GO:0140693">
    <property type="term" value="F:molecular condensate scaffold activity"/>
    <property type="evidence" value="ECO:0007669"/>
    <property type="project" value="Ensembl"/>
</dbReference>
<dbReference type="GO" id="GO:0140677">
    <property type="term" value="F:molecular function activator activity"/>
    <property type="evidence" value="ECO:0007669"/>
    <property type="project" value="Ensembl"/>
</dbReference>
<dbReference type="GO" id="GO:0002020">
    <property type="term" value="F:protease binding"/>
    <property type="evidence" value="ECO:0007669"/>
    <property type="project" value="Ensembl"/>
</dbReference>
<dbReference type="GO" id="GO:0044877">
    <property type="term" value="F:protein-containing complex binding"/>
    <property type="evidence" value="ECO:0007669"/>
    <property type="project" value="Ensembl"/>
</dbReference>
<dbReference type="GO" id="GO:0038023">
    <property type="term" value="F:signaling receptor activity"/>
    <property type="evidence" value="ECO:0007669"/>
    <property type="project" value="Ensembl"/>
</dbReference>
<dbReference type="GO" id="GO:0031802">
    <property type="term" value="F:type 5 metabotropic glutamate receptor binding"/>
    <property type="evidence" value="ECO:0007669"/>
    <property type="project" value="Ensembl"/>
</dbReference>
<dbReference type="GO" id="GO:1904646">
    <property type="term" value="P:cellular response to amyloid-beta"/>
    <property type="evidence" value="ECO:0007669"/>
    <property type="project" value="Ensembl"/>
</dbReference>
<dbReference type="GO" id="GO:0071280">
    <property type="term" value="P:cellular response to copper ion"/>
    <property type="evidence" value="ECO:0007669"/>
    <property type="project" value="Ensembl"/>
</dbReference>
<dbReference type="GO" id="GO:0071466">
    <property type="term" value="P:cellular response to xenobiotic stimulus"/>
    <property type="evidence" value="ECO:0007669"/>
    <property type="project" value="Ensembl"/>
</dbReference>
<dbReference type="GO" id="GO:0035556">
    <property type="term" value="P:intracellular signal transduction"/>
    <property type="evidence" value="ECO:0007669"/>
    <property type="project" value="Ensembl"/>
</dbReference>
<dbReference type="GO" id="GO:0007611">
    <property type="term" value="P:learning or memory"/>
    <property type="evidence" value="ECO:0007669"/>
    <property type="project" value="Ensembl"/>
</dbReference>
<dbReference type="GO" id="GO:0046007">
    <property type="term" value="P:negative regulation of activated T cell proliferation"/>
    <property type="evidence" value="ECO:0007669"/>
    <property type="project" value="Ensembl"/>
</dbReference>
<dbReference type="GO" id="GO:1902430">
    <property type="term" value="P:negative regulation of amyloid-beta formation"/>
    <property type="evidence" value="ECO:0007669"/>
    <property type="project" value="Ensembl"/>
</dbReference>
<dbReference type="GO" id="GO:0043066">
    <property type="term" value="P:negative regulation of apoptotic process"/>
    <property type="evidence" value="ECO:0007669"/>
    <property type="project" value="Ensembl"/>
</dbReference>
<dbReference type="GO" id="GO:0070885">
    <property type="term" value="P:negative regulation of calcineurin-NFAT signaling cascade"/>
    <property type="evidence" value="ECO:0007669"/>
    <property type="project" value="Ensembl"/>
</dbReference>
<dbReference type="GO" id="GO:1902951">
    <property type="term" value="P:negative regulation of dendritic spine maintenance"/>
    <property type="evidence" value="ECO:0007669"/>
    <property type="project" value="Ensembl"/>
</dbReference>
<dbReference type="GO" id="GO:0032700">
    <property type="term" value="P:negative regulation of interleukin-17 production"/>
    <property type="evidence" value="ECO:0007669"/>
    <property type="project" value="Ensembl"/>
</dbReference>
<dbReference type="GO" id="GO:0032703">
    <property type="term" value="P:negative regulation of interleukin-2 production"/>
    <property type="evidence" value="ECO:0007669"/>
    <property type="project" value="Ensembl"/>
</dbReference>
<dbReference type="GO" id="GO:0050860">
    <property type="term" value="P:negative regulation of T cell receptor signaling pathway"/>
    <property type="evidence" value="ECO:0007669"/>
    <property type="project" value="Ensembl"/>
</dbReference>
<dbReference type="GO" id="GO:0000122">
    <property type="term" value="P:negative regulation of transcription by RNA polymerase II"/>
    <property type="evidence" value="ECO:0007669"/>
    <property type="project" value="Ensembl"/>
</dbReference>
<dbReference type="GO" id="GO:0032689">
    <property type="term" value="P:negative regulation of type II interferon production"/>
    <property type="evidence" value="ECO:0007669"/>
    <property type="project" value="Ensembl"/>
</dbReference>
<dbReference type="GO" id="GO:1990535">
    <property type="term" value="P:neuron projection maintenance"/>
    <property type="evidence" value="ECO:0007669"/>
    <property type="project" value="Ensembl"/>
</dbReference>
<dbReference type="GO" id="GO:0050850">
    <property type="term" value="P:positive regulation of calcium-mediated signaling"/>
    <property type="evidence" value="ECO:0007669"/>
    <property type="project" value="Ensembl"/>
</dbReference>
<dbReference type="GO" id="GO:1900451">
    <property type="term" value="P:positive regulation of glutamate receptor signaling pathway"/>
    <property type="evidence" value="ECO:0007669"/>
    <property type="project" value="Ensembl"/>
</dbReference>
<dbReference type="GO" id="GO:0043525">
    <property type="term" value="P:positive regulation of neuron apoptotic process"/>
    <property type="evidence" value="ECO:0007669"/>
    <property type="project" value="Ensembl"/>
</dbReference>
<dbReference type="GO" id="GO:1903078">
    <property type="term" value="P:positive regulation of protein localization to plasma membrane"/>
    <property type="evidence" value="ECO:0007669"/>
    <property type="project" value="Ensembl"/>
</dbReference>
<dbReference type="GO" id="GO:0090314">
    <property type="term" value="P:positive regulation of protein targeting to membrane"/>
    <property type="evidence" value="ECO:0007669"/>
    <property type="project" value="Ensembl"/>
</dbReference>
<dbReference type="GO" id="GO:0031648">
    <property type="term" value="P:protein destabilization"/>
    <property type="evidence" value="ECO:0007669"/>
    <property type="project" value="Ensembl"/>
</dbReference>
<dbReference type="GO" id="GO:0051260">
    <property type="term" value="P:protein homooligomerization"/>
    <property type="evidence" value="ECO:0007669"/>
    <property type="project" value="InterPro"/>
</dbReference>
<dbReference type="GO" id="GO:1905664">
    <property type="term" value="P:regulation of calcium ion import across plasma membrane"/>
    <property type="evidence" value="ECO:0007669"/>
    <property type="project" value="Ensembl"/>
</dbReference>
<dbReference type="GO" id="GO:1901379">
    <property type="term" value="P:regulation of potassium ion transmembrane transport"/>
    <property type="evidence" value="ECO:0007669"/>
    <property type="project" value="Ensembl"/>
</dbReference>
<dbReference type="GO" id="GO:0006979">
    <property type="term" value="P:response to oxidative stress"/>
    <property type="evidence" value="ECO:0007669"/>
    <property type="project" value="Ensembl"/>
</dbReference>
<dbReference type="FunFam" id="1.10.790.10:FF:000001">
    <property type="entry name" value="Major prion protein"/>
    <property type="match status" value="1"/>
</dbReference>
<dbReference type="Gene3D" id="1.10.790.10">
    <property type="entry name" value="Prion/Doppel protein, beta-ribbon domain"/>
    <property type="match status" value="1"/>
</dbReference>
<dbReference type="InterPro" id="IPR000817">
    <property type="entry name" value="Prion"/>
</dbReference>
<dbReference type="InterPro" id="IPR036924">
    <property type="entry name" value="Prion/Doppel_b-ribbon_dom_sf"/>
</dbReference>
<dbReference type="InterPro" id="IPR022416">
    <property type="entry name" value="Prion/Doppel_prot_b-ribbon_dom"/>
</dbReference>
<dbReference type="InterPro" id="IPR020949">
    <property type="entry name" value="Prion_copper_b_octapeptide"/>
</dbReference>
<dbReference type="InterPro" id="IPR025860">
    <property type="entry name" value="Prion_N"/>
</dbReference>
<dbReference type="PANTHER" id="PTHR15506">
    <property type="entry name" value="DOPPEL PRION"/>
    <property type="match status" value="1"/>
</dbReference>
<dbReference type="PANTHER" id="PTHR15506:SF2">
    <property type="entry name" value="MAJOR PRION PROTEIN"/>
    <property type="match status" value="1"/>
</dbReference>
<dbReference type="Pfam" id="PF00377">
    <property type="entry name" value="Prion"/>
    <property type="match status" value="1"/>
</dbReference>
<dbReference type="Pfam" id="PF11587">
    <property type="entry name" value="Prion_bPrPp"/>
    <property type="match status" value="1"/>
</dbReference>
<dbReference type="Pfam" id="PF03991">
    <property type="entry name" value="Prion_octapep"/>
    <property type="match status" value="1"/>
</dbReference>
<dbReference type="PRINTS" id="PR00341">
    <property type="entry name" value="PRION"/>
</dbReference>
<dbReference type="SMART" id="SM00157">
    <property type="entry name" value="PRP"/>
    <property type="match status" value="1"/>
</dbReference>
<dbReference type="SUPFAM" id="SSF54098">
    <property type="entry name" value="Prion-like"/>
    <property type="match status" value="1"/>
</dbReference>
<dbReference type="PROSITE" id="PS00291">
    <property type="entry name" value="PRION_1"/>
    <property type="match status" value="1"/>
</dbReference>
<dbReference type="PROSITE" id="PS00706">
    <property type="entry name" value="PRION_2"/>
    <property type="match status" value="1"/>
</dbReference>
<accession>P40252</accession>
<accession>Q28419</accession>
<sequence>MANLGCWMLVLFVATWSDLGLCKKRPKPGGWNTGGSRYPGQGSPGGNRYPPQGGGGWGQPHGGGWGQPHGGGWGQPHGGGWGQPHGGGWGQGGGTHSQWNKPSKPKTNMKHMAGAAAAGAVVGGLGGYMLGSAMSRPIIHFGSDYEDRYYRENMHRYPNQVYYRPMDQYSNQNNFVHDCVNITIKQHTVTTTTKGENFTETDVKMMERVVEQMCITQYERESQAYYQRGSSMVLFSSPPVILLISFLIFLIVG</sequence>
<gene>
    <name type="primary">PRNP</name>
    <name type="synonym">PRP</name>
</gene>
<comment type="function">
    <text evidence="2 4">Its primary physiological function is unclear. May play a role in neuronal development and synaptic plasticity. May be required for neuronal myelin sheath maintenance. May promote myelin homeostasis through acting as an agonist for ADGRG6 receptor. May play a role in iron uptake and iron homeostasis. Soluble oligomers are toxic to cultured neuroblastoma cells and induce apoptosis (in vitro) (By similarity). Association with GPC1 (via its heparan sulfate chains) targets PRNP to lipid rafts. Also provides Cu(2+) or Zn(2+) for the ascorbate-mediated GPC1 deaminase degradation of its heparan sulfate side chains (By similarity).</text>
</comment>
<comment type="subunit">
    <text evidence="2 4">Monomer and homodimer. Has a tendency to aggregate into amyloid fibrils containing a cross-beta spine, formed by a steric zipper of superposed beta-strands. Soluble oligomers may represent an intermediate stage on the path to fibril formation. Copper binding may promote oligomerization. Interacts with GRB2, APP, ERI3/PRNPIP and SYN1 (By similarity). Mislocalized cytosolically exposed PrP interacts with MGRN1; this interaction alters MGRN1 subcellular location and causes lysosomal enlargement (By similarity). Interacts with APP. Interacts with KIAA1191 (By similarity). Interacts with ADGRG6 (By similarity).</text>
</comment>
<comment type="subcellular location">
    <subcellularLocation>
        <location evidence="2">Cell membrane</location>
        <topology evidence="2">Lipid-anchor</topology>
        <topology evidence="2">GPI-anchor</topology>
    </subcellularLocation>
    <subcellularLocation>
        <location evidence="4">Golgi apparatus</location>
    </subcellularLocation>
    <text evidence="2">Targeted to lipid rafts via association with the heparan sulfate chains of GPC1. Colocates, in the presence of Cu(2+), to vesicles in para- and perinuclear regions, where both proteins undergo internalization. Heparin displaces PRNP from lipid rafts and promotes endocytosis.</text>
</comment>
<comment type="domain">
    <text evidence="2">The normal, monomeric form has a mainly alpha-helical structure. The disease-associated, protease-resistant form forms amyloid fibrils containing a cross-beta spine, formed by a steric zipper of superposed beta-strands. Disease mutations may favor intermolecular contacts via short beta strands, and may thereby trigger oligomerization.</text>
</comment>
<comment type="domain">
    <text evidence="2">Contains an N-terminal region composed of octamer repeats. At low copper concentrations, the sidechains of His residues from three or four repeats contribute to the binding of a single copper ion. Alternatively, a copper ion can be bound by interaction with the sidechain and backbone amide nitrogen of a single His residue. The observed copper binding stoichiometry suggests that two repeat regions cooperate to stabilize the binding of a single copper ion. At higher copper concentrations, each octamer can bind one copper ion by interactions with the His sidechain and Gly backbone atoms. A mixture of binding types may occur, especially in the case of octamer repeat expansion. Copper binding may stabilize the conformation of this region and may promote oligomerization.</text>
</comment>
<comment type="disease">
    <text evidence="7">PrP is found in high quantity in the brain of humans and animals infected with the degenerative neurological diseases kuru, Creutzfeldt-Jakob disease (CJD), Gerstmann-Straussler syndrome (GSS), scrapie, bovine spongiform encephalopathy (BSE), transmissible mink encephalopathy (TME), etc.</text>
</comment>
<comment type="similarity">
    <text evidence="7">Belongs to the prion family.</text>
</comment>